<keyword id="KW-0456">Lyase</keyword>
<gene>
    <name type="ordered locus">P9303_07131</name>
</gene>
<comment type="catalytic activity">
    <reaction evidence="1">
        <text>(4aS,6R)-4a-hydroxy-L-erythro-5,6,7,8-tetrahydrobiopterin = (6R)-L-erythro-6,7-dihydrobiopterin + H2O</text>
        <dbReference type="Rhea" id="RHEA:11920"/>
        <dbReference type="ChEBI" id="CHEBI:15377"/>
        <dbReference type="ChEBI" id="CHEBI:15642"/>
        <dbReference type="ChEBI" id="CHEBI:43120"/>
        <dbReference type="EC" id="4.2.1.96"/>
    </reaction>
</comment>
<comment type="similarity">
    <text evidence="1">Belongs to the pterin-4-alpha-carbinolamine dehydratase family.</text>
</comment>
<dbReference type="EC" id="4.2.1.96" evidence="1"/>
<dbReference type="EMBL" id="CP000554">
    <property type="protein sequence ID" value="ABM77464.1"/>
    <property type="molecule type" value="Genomic_DNA"/>
</dbReference>
<dbReference type="RefSeq" id="WP_011825379.1">
    <property type="nucleotide sequence ID" value="NC_008820.1"/>
</dbReference>
<dbReference type="SMR" id="A2C7K4"/>
<dbReference type="STRING" id="59922.P9303_07131"/>
<dbReference type="KEGG" id="pmf:P9303_07131"/>
<dbReference type="HOGENOM" id="CLU_081974_3_2_3"/>
<dbReference type="BioCyc" id="PMAR59922:G1G80-653-MONOMER"/>
<dbReference type="Proteomes" id="UP000002274">
    <property type="component" value="Chromosome"/>
</dbReference>
<dbReference type="GO" id="GO:0008124">
    <property type="term" value="F:4-alpha-hydroxytetrahydrobiopterin dehydratase activity"/>
    <property type="evidence" value="ECO:0007669"/>
    <property type="project" value="UniProtKB-UniRule"/>
</dbReference>
<dbReference type="GO" id="GO:0006729">
    <property type="term" value="P:tetrahydrobiopterin biosynthetic process"/>
    <property type="evidence" value="ECO:0007669"/>
    <property type="project" value="InterPro"/>
</dbReference>
<dbReference type="CDD" id="cd00914">
    <property type="entry name" value="PCD_DCoH_subfamily_b"/>
    <property type="match status" value="1"/>
</dbReference>
<dbReference type="Gene3D" id="3.30.1360.20">
    <property type="entry name" value="Transcriptional coactivator/pterin dehydratase"/>
    <property type="match status" value="1"/>
</dbReference>
<dbReference type="HAMAP" id="MF_00434">
    <property type="entry name" value="Pterin_4_alpha"/>
    <property type="match status" value="1"/>
</dbReference>
<dbReference type="InterPro" id="IPR036428">
    <property type="entry name" value="PCD_sf"/>
</dbReference>
<dbReference type="InterPro" id="IPR001533">
    <property type="entry name" value="Pterin_deHydtase"/>
</dbReference>
<dbReference type="NCBIfam" id="NF002017">
    <property type="entry name" value="PRK00823.1-2"/>
    <property type="match status" value="1"/>
</dbReference>
<dbReference type="NCBIfam" id="NF002018">
    <property type="entry name" value="PRK00823.1-3"/>
    <property type="match status" value="1"/>
</dbReference>
<dbReference type="PANTHER" id="PTHR12599">
    <property type="entry name" value="PTERIN-4-ALPHA-CARBINOLAMINE DEHYDRATASE"/>
    <property type="match status" value="1"/>
</dbReference>
<dbReference type="PANTHER" id="PTHR12599:SF0">
    <property type="entry name" value="PTERIN-4-ALPHA-CARBINOLAMINE DEHYDRATASE"/>
    <property type="match status" value="1"/>
</dbReference>
<dbReference type="Pfam" id="PF01329">
    <property type="entry name" value="Pterin_4a"/>
    <property type="match status" value="1"/>
</dbReference>
<dbReference type="SUPFAM" id="SSF55248">
    <property type="entry name" value="PCD-like"/>
    <property type="match status" value="1"/>
</dbReference>
<proteinExistence type="inferred from homology"/>
<accession>A2C7K4</accession>
<name>PHS_PROM3</name>
<reference key="1">
    <citation type="journal article" date="2007" name="PLoS Genet.">
        <title>Patterns and implications of gene gain and loss in the evolution of Prochlorococcus.</title>
        <authorList>
            <person name="Kettler G.C."/>
            <person name="Martiny A.C."/>
            <person name="Huang K."/>
            <person name="Zucker J."/>
            <person name="Coleman M.L."/>
            <person name="Rodrigue S."/>
            <person name="Chen F."/>
            <person name="Lapidus A."/>
            <person name="Ferriera S."/>
            <person name="Johnson J."/>
            <person name="Steglich C."/>
            <person name="Church G.M."/>
            <person name="Richardson P."/>
            <person name="Chisholm S.W."/>
        </authorList>
    </citation>
    <scope>NUCLEOTIDE SEQUENCE [LARGE SCALE GENOMIC DNA]</scope>
    <source>
        <strain>MIT 9303</strain>
    </source>
</reference>
<organism>
    <name type="scientific">Prochlorococcus marinus (strain MIT 9303)</name>
    <dbReference type="NCBI Taxonomy" id="59922"/>
    <lineage>
        <taxon>Bacteria</taxon>
        <taxon>Bacillati</taxon>
        <taxon>Cyanobacteriota</taxon>
        <taxon>Cyanophyceae</taxon>
        <taxon>Synechococcales</taxon>
        <taxon>Prochlorococcaceae</taxon>
        <taxon>Prochlorococcus</taxon>
    </lineage>
</organism>
<sequence>MTATLLTAEQLSSVAEKLPGWTLADQRLRRQWRFRNFVEAFGFMTRVALLAEAMNHHPEWSNVYATVTIELTTHDVNGLSDRDLKLAEAINLLEPG</sequence>
<protein>
    <recommendedName>
        <fullName evidence="1">Putative pterin-4-alpha-carbinolamine dehydratase</fullName>
        <shortName evidence="1">PHS</shortName>
        <ecNumber evidence="1">4.2.1.96</ecNumber>
    </recommendedName>
    <alternativeName>
        <fullName evidence="1">4-alpha-hydroxy-tetrahydropterin dehydratase</fullName>
    </alternativeName>
    <alternativeName>
        <fullName evidence="1">Pterin carbinolamine dehydratase</fullName>
        <shortName evidence="1">PCD</shortName>
    </alternativeName>
</protein>
<evidence type="ECO:0000255" key="1">
    <source>
        <dbReference type="HAMAP-Rule" id="MF_00434"/>
    </source>
</evidence>
<feature type="chain" id="PRO_1000050432" description="Putative pterin-4-alpha-carbinolamine dehydratase">
    <location>
        <begin position="1"/>
        <end position="96"/>
    </location>
</feature>